<feature type="chain" id="PRO_1000215867" description="D-ribose pyranase">
    <location>
        <begin position="1"/>
        <end position="132"/>
    </location>
</feature>
<feature type="active site" description="Proton donor" evidence="1">
    <location>
        <position position="20"/>
    </location>
</feature>
<feature type="binding site" evidence="1">
    <location>
        <position position="28"/>
    </location>
    <ligand>
        <name>substrate</name>
    </ligand>
</feature>
<feature type="binding site" evidence="1">
    <location>
        <position position="98"/>
    </location>
    <ligand>
        <name>substrate</name>
    </ligand>
</feature>
<feature type="binding site" evidence="1">
    <location>
        <begin position="121"/>
        <end position="123"/>
    </location>
    <ligand>
        <name>substrate</name>
    </ligand>
</feature>
<sequence>MKRSGIINREIARIAAEMGHMDRITVCDCGFPIPDGAKVVDLSIIKGFPRLIDVLKALREELIIEKIILAKEIVDKNPEMHNAILKLFSDAAVDYVEHSEFKKIAAVSSKAYIRTGEATPYSNVILSSGVDF</sequence>
<proteinExistence type="inferred from homology"/>
<comment type="function">
    <text evidence="1">Catalyzes the interconversion of beta-pyran and beta-furan forms of D-ribose.</text>
</comment>
<comment type="catalytic activity">
    <reaction evidence="1">
        <text>beta-D-ribopyranose = beta-D-ribofuranose</text>
        <dbReference type="Rhea" id="RHEA:25432"/>
        <dbReference type="ChEBI" id="CHEBI:27476"/>
        <dbReference type="ChEBI" id="CHEBI:47002"/>
        <dbReference type="EC" id="5.4.99.62"/>
    </reaction>
</comment>
<comment type="pathway">
    <text evidence="1">Carbohydrate metabolism; D-ribose degradation; D-ribose 5-phosphate from beta-D-ribopyranose: step 1/2.</text>
</comment>
<comment type="subunit">
    <text evidence="1">Homodecamer.</text>
</comment>
<comment type="subcellular location">
    <subcellularLocation>
        <location evidence="1">Cytoplasm</location>
    </subcellularLocation>
</comment>
<comment type="similarity">
    <text evidence="1">Belongs to the RbsD / FucU family. RbsD subfamily.</text>
</comment>
<name>RBSD_KOSOT</name>
<protein>
    <recommendedName>
        <fullName evidence="1">D-ribose pyranase</fullName>
        <ecNumber evidence="1">5.4.99.62</ecNumber>
    </recommendedName>
</protein>
<accession>C5CEY9</accession>
<reference key="1">
    <citation type="submission" date="2009-06" db="EMBL/GenBank/DDBJ databases">
        <title>Complete sequence of Thermotogales bacterium TBF 19.5.1.</title>
        <authorList>
            <consortium name="US DOE Joint Genome Institute"/>
            <person name="Lucas S."/>
            <person name="Copeland A."/>
            <person name="Lapidus A."/>
            <person name="Glavina del Rio T."/>
            <person name="Tice H."/>
            <person name="Bruce D."/>
            <person name="Goodwin L."/>
            <person name="Pitluck S."/>
            <person name="Chertkov O."/>
            <person name="Brettin T."/>
            <person name="Detter J.C."/>
            <person name="Han C."/>
            <person name="Schmutz J."/>
            <person name="Larimer F."/>
            <person name="Land M."/>
            <person name="Hauser L."/>
            <person name="Kyrpides N."/>
            <person name="Ovchinnikova G."/>
            <person name="Noll K."/>
        </authorList>
    </citation>
    <scope>NUCLEOTIDE SEQUENCE [LARGE SCALE GENOMIC DNA]</scope>
    <source>
        <strain>ATCC BAA-1733 / DSM 21960 / TBF 19.5.1</strain>
    </source>
</reference>
<gene>
    <name evidence="1" type="primary">rbsD</name>
    <name type="ordered locus">Kole_0600</name>
</gene>
<dbReference type="EC" id="5.4.99.62" evidence="1"/>
<dbReference type="EMBL" id="CP001634">
    <property type="protein sequence ID" value="ACR79318.1"/>
    <property type="molecule type" value="Genomic_DNA"/>
</dbReference>
<dbReference type="RefSeq" id="WP_012745100.1">
    <property type="nucleotide sequence ID" value="NC_012785.1"/>
</dbReference>
<dbReference type="SMR" id="C5CEY9"/>
<dbReference type="STRING" id="521045.Kole_0600"/>
<dbReference type="KEGG" id="kol:Kole_0600"/>
<dbReference type="eggNOG" id="COG1869">
    <property type="taxonomic scope" value="Bacteria"/>
</dbReference>
<dbReference type="HOGENOM" id="CLU_135498_0_0_0"/>
<dbReference type="OrthoDB" id="9805009at2"/>
<dbReference type="UniPathway" id="UPA00916">
    <property type="reaction ID" value="UER00888"/>
</dbReference>
<dbReference type="Proteomes" id="UP000002382">
    <property type="component" value="Chromosome"/>
</dbReference>
<dbReference type="GO" id="GO:0005829">
    <property type="term" value="C:cytosol"/>
    <property type="evidence" value="ECO:0007669"/>
    <property type="project" value="TreeGrafter"/>
</dbReference>
<dbReference type="GO" id="GO:0062193">
    <property type="term" value="F:D-ribose pyranase activity"/>
    <property type="evidence" value="ECO:0007669"/>
    <property type="project" value="UniProtKB-EC"/>
</dbReference>
<dbReference type="GO" id="GO:0016872">
    <property type="term" value="F:intramolecular lyase activity"/>
    <property type="evidence" value="ECO:0007669"/>
    <property type="project" value="UniProtKB-UniRule"/>
</dbReference>
<dbReference type="GO" id="GO:0048029">
    <property type="term" value="F:monosaccharide binding"/>
    <property type="evidence" value="ECO:0007669"/>
    <property type="project" value="InterPro"/>
</dbReference>
<dbReference type="GO" id="GO:0019303">
    <property type="term" value="P:D-ribose catabolic process"/>
    <property type="evidence" value="ECO:0007669"/>
    <property type="project" value="UniProtKB-UniRule"/>
</dbReference>
<dbReference type="Gene3D" id="3.40.1650.10">
    <property type="entry name" value="RbsD-like domain"/>
    <property type="match status" value="1"/>
</dbReference>
<dbReference type="HAMAP" id="MF_01661">
    <property type="entry name" value="D_rib_pyranase"/>
    <property type="match status" value="1"/>
</dbReference>
<dbReference type="InterPro" id="IPR023064">
    <property type="entry name" value="D-ribose_pyranase"/>
</dbReference>
<dbReference type="InterPro" id="IPR023750">
    <property type="entry name" value="RbsD-like_sf"/>
</dbReference>
<dbReference type="InterPro" id="IPR007721">
    <property type="entry name" value="RbsD_FucU"/>
</dbReference>
<dbReference type="NCBIfam" id="NF008761">
    <property type="entry name" value="PRK11797.1"/>
    <property type="match status" value="1"/>
</dbReference>
<dbReference type="PANTHER" id="PTHR37831">
    <property type="entry name" value="D-RIBOSE PYRANASE"/>
    <property type="match status" value="1"/>
</dbReference>
<dbReference type="PANTHER" id="PTHR37831:SF1">
    <property type="entry name" value="D-RIBOSE PYRANASE"/>
    <property type="match status" value="1"/>
</dbReference>
<dbReference type="Pfam" id="PF05025">
    <property type="entry name" value="RbsD_FucU"/>
    <property type="match status" value="1"/>
</dbReference>
<dbReference type="SUPFAM" id="SSF102546">
    <property type="entry name" value="RbsD-like"/>
    <property type="match status" value="1"/>
</dbReference>
<keyword id="KW-0119">Carbohydrate metabolism</keyword>
<keyword id="KW-0963">Cytoplasm</keyword>
<keyword id="KW-0413">Isomerase</keyword>
<keyword id="KW-1185">Reference proteome</keyword>
<evidence type="ECO:0000255" key="1">
    <source>
        <dbReference type="HAMAP-Rule" id="MF_01661"/>
    </source>
</evidence>
<organism>
    <name type="scientific">Kosmotoga olearia (strain ATCC BAA-1733 / DSM 21960 / TBF 19.5.1)</name>
    <dbReference type="NCBI Taxonomy" id="521045"/>
    <lineage>
        <taxon>Bacteria</taxon>
        <taxon>Thermotogati</taxon>
        <taxon>Thermotogota</taxon>
        <taxon>Thermotogae</taxon>
        <taxon>Kosmotogales</taxon>
        <taxon>Kosmotogaceae</taxon>
        <taxon>Kosmotoga</taxon>
    </lineage>
</organism>